<keyword id="KW-0694">RNA-binding</keyword>
<keyword id="KW-0804">Transcription</keyword>
<keyword id="KW-0889">Transcription antitermination</keyword>
<keyword id="KW-0805">Transcription regulation</keyword>
<dbReference type="EMBL" id="AM295007">
    <property type="protein sequence ID" value="CAM29647.1"/>
    <property type="molecule type" value="Genomic_DNA"/>
</dbReference>
<dbReference type="RefSeq" id="WP_002988501.1">
    <property type="nucleotide sequence ID" value="NC_009332.1"/>
</dbReference>
<dbReference type="SMR" id="A2RCS4"/>
<dbReference type="GeneID" id="69900353"/>
<dbReference type="KEGG" id="spf:SpyM50305"/>
<dbReference type="HOGENOM" id="CLU_087843_3_2_9"/>
<dbReference type="GO" id="GO:0005829">
    <property type="term" value="C:cytosol"/>
    <property type="evidence" value="ECO:0007669"/>
    <property type="project" value="TreeGrafter"/>
</dbReference>
<dbReference type="GO" id="GO:0003723">
    <property type="term" value="F:RNA binding"/>
    <property type="evidence" value="ECO:0007669"/>
    <property type="project" value="UniProtKB-UniRule"/>
</dbReference>
<dbReference type="GO" id="GO:0006353">
    <property type="term" value="P:DNA-templated transcription termination"/>
    <property type="evidence" value="ECO:0007669"/>
    <property type="project" value="UniProtKB-UniRule"/>
</dbReference>
<dbReference type="GO" id="GO:0031564">
    <property type="term" value="P:transcription antitermination"/>
    <property type="evidence" value="ECO:0007669"/>
    <property type="project" value="UniProtKB-KW"/>
</dbReference>
<dbReference type="Gene3D" id="1.10.940.10">
    <property type="entry name" value="NusB-like"/>
    <property type="match status" value="1"/>
</dbReference>
<dbReference type="HAMAP" id="MF_00073">
    <property type="entry name" value="NusB"/>
    <property type="match status" value="1"/>
</dbReference>
<dbReference type="InterPro" id="IPR035926">
    <property type="entry name" value="NusB-like_sf"/>
</dbReference>
<dbReference type="InterPro" id="IPR011605">
    <property type="entry name" value="NusB_fam"/>
</dbReference>
<dbReference type="InterPro" id="IPR006027">
    <property type="entry name" value="NusB_RsmB_TIM44"/>
</dbReference>
<dbReference type="NCBIfam" id="TIGR01951">
    <property type="entry name" value="nusB"/>
    <property type="match status" value="1"/>
</dbReference>
<dbReference type="NCBIfam" id="NF001223">
    <property type="entry name" value="PRK00202.1-1"/>
    <property type="match status" value="1"/>
</dbReference>
<dbReference type="PANTHER" id="PTHR11078:SF3">
    <property type="entry name" value="ANTITERMINATION NUSB DOMAIN-CONTAINING PROTEIN"/>
    <property type="match status" value="1"/>
</dbReference>
<dbReference type="PANTHER" id="PTHR11078">
    <property type="entry name" value="N UTILIZATION SUBSTANCE PROTEIN B-RELATED"/>
    <property type="match status" value="1"/>
</dbReference>
<dbReference type="Pfam" id="PF01029">
    <property type="entry name" value="NusB"/>
    <property type="match status" value="1"/>
</dbReference>
<dbReference type="SUPFAM" id="SSF48013">
    <property type="entry name" value="NusB-like"/>
    <property type="match status" value="1"/>
</dbReference>
<evidence type="ECO:0000255" key="1">
    <source>
        <dbReference type="HAMAP-Rule" id="MF_00073"/>
    </source>
</evidence>
<accession>A2RCS4</accession>
<proteinExistence type="inferred from homology"/>
<organism>
    <name type="scientific">Streptococcus pyogenes serotype M5 (strain Manfredo)</name>
    <dbReference type="NCBI Taxonomy" id="160491"/>
    <lineage>
        <taxon>Bacteria</taxon>
        <taxon>Bacillati</taxon>
        <taxon>Bacillota</taxon>
        <taxon>Bacilli</taxon>
        <taxon>Lactobacillales</taxon>
        <taxon>Streptococcaceae</taxon>
        <taxon>Streptococcus</taxon>
    </lineage>
</organism>
<sequence>MTNSFQNSRRDLRERAFQALFNIEMGAELLAASQFAYGYDKVTGEDAQVLELPIFLLSLVTGVNNHKEELDNLISTHLKKGWSLERLTLTDKTLLRLGLFEIKYFDETPDRVALNEIIEVAKKYSDETSAKFINGLLSQYVSEAPSANKS</sequence>
<comment type="function">
    <text evidence="1">Involved in transcription antitermination. Required for transcription of ribosomal RNA (rRNA) genes. Binds specifically to the boxA antiterminator sequence of the ribosomal RNA (rrn) operons.</text>
</comment>
<comment type="similarity">
    <text evidence="1">Belongs to the NusB family.</text>
</comment>
<reference key="1">
    <citation type="journal article" date="2007" name="J. Bacteriol.">
        <title>Complete genome of acute rheumatic fever-associated serotype M5 Streptococcus pyogenes strain Manfredo.</title>
        <authorList>
            <person name="Holden M.T.G."/>
            <person name="Scott A."/>
            <person name="Cherevach I."/>
            <person name="Chillingworth T."/>
            <person name="Churcher C."/>
            <person name="Cronin A."/>
            <person name="Dowd L."/>
            <person name="Feltwell T."/>
            <person name="Hamlin N."/>
            <person name="Holroyd S."/>
            <person name="Jagels K."/>
            <person name="Moule S."/>
            <person name="Mungall K."/>
            <person name="Quail M.A."/>
            <person name="Price C."/>
            <person name="Rabbinowitsch E."/>
            <person name="Sharp S."/>
            <person name="Skelton J."/>
            <person name="Whitehead S."/>
            <person name="Barrell B.G."/>
            <person name="Kehoe M."/>
            <person name="Parkhill J."/>
        </authorList>
    </citation>
    <scope>NUCLEOTIDE SEQUENCE [LARGE SCALE GENOMIC DNA]</scope>
    <source>
        <strain>Manfredo</strain>
    </source>
</reference>
<gene>
    <name evidence="1" type="primary">nusB</name>
    <name type="ordered locus">SpyM50305</name>
</gene>
<protein>
    <recommendedName>
        <fullName evidence="1">Transcription antitermination protein NusB</fullName>
    </recommendedName>
    <alternativeName>
        <fullName evidence="1">Antitermination factor NusB</fullName>
    </alternativeName>
</protein>
<feature type="chain" id="PRO_1000023780" description="Transcription antitermination protein NusB">
    <location>
        <begin position="1"/>
        <end position="150"/>
    </location>
</feature>
<name>NUSB_STRPG</name>